<feature type="signal peptide" evidence="2">
    <location>
        <begin position="1"/>
        <end position="27"/>
    </location>
</feature>
<feature type="chain" id="PRO_0000000400" description="Acetylcholine receptor subunit alpha-type acr-7">
    <location>
        <begin position="28"/>
        <end position="538"/>
    </location>
</feature>
<feature type="topological domain" description="Extracellular" evidence="2">
    <location>
        <begin position="28"/>
        <end position="250"/>
    </location>
</feature>
<feature type="transmembrane region" description="Helical" evidence="2">
    <location>
        <begin position="251"/>
        <end position="271"/>
    </location>
</feature>
<feature type="transmembrane region" description="Helical" evidence="2">
    <location>
        <begin position="280"/>
        <end position="300"/>
    </location>
</feature>
<feature type="transmembrane region" description="Helical" evidence="2">
    <location>
        <begin position="313"/>
        <end position="333"/>
    </location>
</feature>
<feature type="topological domain" description="Cytoplasmic" evidence="2">
    <location>
        <begin position="334"/>
        <end position="513"/>
    </location>
</feature>
<feature type="transmembrane region" description="Helical" evidence="2">
    <location>
        <begin position="514"/>
        <end position="534"/>
    </location>
</feature>
<feature type="glycosylation site" description="N-linked (GlcNAc...) asparagine" evidence="2">
    <location>
        <position position="41"/>
    </location>
</feature>
<feature type="glycosylation site" description="N-linked (GlcNAc...) asparagine" evidence="3">
    <location>
        <position position="101"/>
    </location>
</feature>
<feature type="disulfide bond" evidence="1">
    <location>
        <begin position="160"/>
        <end position="174"/>
    </location>
</feature>
<feature type="disulfide bond" description="Associated with receptor activation" evidence="1">
    <location>
        <begin position="229"/>
        <end position="230"/>
    </location>
</feature>
<gene>
    <name type="primary">acr-7</name>
    <name type="ORF">T09A5.3</name>
</gene>
<accession>P45963</accession>
<accession>Q9GQV0</accession>
<proteinExistence type="evidence at protein level"/>
<keyword id="KW-1003">Cell membrane</keyword>
<keyword id="KW-1015">Disulfide bond</keyword>
<keyword id="KW-0325">Glycoprotein</keyword>
<keyword id="KW-0407">Ion channel</keyword>
<keyword id="KW-0406">Ion transport</keyword>
<keyword id="KW-1071">Ligand-gated ion channel</keyword>
<keyword id="KW-0472">Membrane</keyword>
<keyword id="KW-0628">Postsynaptic cell membrane</keyword>
<keyword id="KW-0675">Receptor</keyword>
<keyword id="KW-1185">Reference proteome</keyword>
<keyword id="KW-0732">Signal</keyword>
<keyword id="KW-0770">Synapse</keyword>
<keyword id="KW-0812">Transmembrane</keyword>
<keyword id="KW-1133">Transmembrane helix</keyword>
<keyword id="KW-0813">Transport</keyword>
<dbReference type="EMBL" id="AF187012">
    <property type="protein sequence ID" value="AAG35182.1"/>
    <property type="molecule type" value="mRNA"/>
</dbReference>
<dbReference type="EMBL" id="Z36753">
    <property type="protein sequence ID" value="CAA85338.2"/>
    <property type="molecule type" value="Genomic_DNA"/>
</dbReference>
<dbReference type="PIR" id="T24724">
    <property type="entry name" value="T24724"/>
</dbReference>
<dbReference type="RefSeq" id="NP_495647.1">
    <property type="nucleotide sequence ID" value="NM_063246.5"/>
</dbReference>
<dbReference type="SMR" id="P45963"/>
<dbReference type="FunCoup" id="P45963">
    <property type="interactions" value="57"/>
</dbReference>
<dbReference type="STRING" id="6239.T09A5.3.1"/>
<dbReference type="GlyCosmos" id="P45963">
    <property type="glycosylation" value="2 sites, No reported glycans"/>
</dbReference>
<dbReference type="iPTMnet" id="P45963"/>
<dbReference type="PaxDb" id="6239-T09A5.3"/>
<dbReference type="EnsemblMetazoa" id="T09A5.3.1">
    <property type="protein sequence ID" value="T09A5.3.1"/>
    <property type="gene ID" value="WBGene00000046"/>
</dbReference>
<dbReference type="GeneID" id="174262"/>
<dbReference type="KEGG" id="cel:CELE_T09A5.3"/>
<dbReference type="UCSC" id="T09A5.3">
    <property type="organism name" value="c. elegans"/>
</dbReference>
<dbReference type="AGR" id="WB:WBGene00000046"/>
<dbReference type="CTD" id="174262"/>
<dbReference type="WormBase" id="T09A5.3">
    <property type="protein sequence ID" value="CE28078"/>
    <property type="gene ID" value="WBGene00000046"/>
    <property type="gene designation" value="acr-7"/>
</dbReference>
<dbReference type="eggNOG" id="KOG3646">
    <property type="taxonomic scope" value="Eukaryota"/>
</dbReference>
<dbReference type="HOGENOM" id="CLU_018074_0_3_1"/>
<dbReference type="InParanoid" id="P45963"/>
<dbReference type="OMA" id="DGVINWI"/>
<dbReference type="OrthoDB" id="5975154at2759"/>
<dbReference type="PhylomeDB" id="P45963"/>
<dbReference type="PRO" id="PR:P45963"/>
<dbReference type="Proteomes" id="UP000001940">
    <property type="component" value="Chromosome II"/>
</dbReference>
<dbReference type="Bgee" id="WBGene00000046">
    <property type="expression patterns" value="Expressed in pharyngeal muscle cell (C elegans) and 3 other cell types or tissues"/>
</dbReference>
<dbReference type="GO" id="GO:0005892">
    <property type="term" value="C:acetylcholine-gated channel complex"/>
    <property type="evidence" value="ECO:0000318"/>
    <property type="project" value="GO_Central"/>
</dbReference>
<dbReference type="GO" id="GO:0043005">
    <property type="term" value="C:neuron projection"/>
    <property type="evidence" value="ECO:0000318"/>
    <property type="project" value="GO_Central"/>
</dbReference>
<dbReference type="GO" id="GO:0005886">
    <property type="term" value="C:plasma membrane"/>
    <property type="evidence" value="ECO:0000318"/>
    <property type="project" value="GO_Central"/>
</dbReference>
<dbReference type="GO" id="GO:0045211">
    <property type="term" value="C:postsynaptic membrane"/>
    <property type="evidence" value="ECO:0007669"/>
    <property type="project" value="UniProtKB-SubCell"/>
</dbReference>
<dbReference type="GO" id="GO:0045202">
    <property type="term" value="C:synapse"/>
    <property type="evidence" value="ECO:0000318"/>
    <property type="project" value="GO_Central"/>
</dbReference>
<dbReference type="GO" id="GO:0005231">
    <property type="term" value="F:excitatory extracellular ligand-gated monoatomic ion channel activity"/>
    <property type="evidence" value="ECO:0000318"/>
    <property type="project" value="GO_Central"/>
</dbReference>
<dbReference type="GO" id="GO:0004888">
    <property type="term" value="F:transmembrane signaling receptor activity"/>
    <property type="evidence" value="ECO:0007669"/>
    <property type="project" value="InterPro"/>
</dbReference>
<dbReference type="GO" id="GO:1904315">
    <property type="term" value="F:transmitter-gated monoatomic ion channel activity involved in regulation of postsynaptic membrane potential"/>
    <property type="evidence" value="ECO:0000318"/>
    <property type="project" value="GO_Central"/>
</dbReference>
<dbReference type="GO" id="GO:0007268">
    <property type="term" value="P:chemical synaptic transmission"/>
    <property type="evidence" value="ECO:0000318"/>
    <property type="project" value="GO_Central"/>
</dbReference>
<dbReference type="GO" id="GO:0034220">
    <property type="term" value="P:monoatomic ion transmembrane transport"/>
    <property type="evidence" value="ECO:0000318"/>
    <property type="project" value="GO_Central"/>
</dbReference>
<dbReference type="GO" id="GO:0042391">
    <property type="term" value="P:regulation of membrane potential"/>
    <property type="evidence" value="ECO:0000318"/>
    <property type="project" value="GO_Central"/>
</dbReference>
<dbReference type="CDD" id="cd18997">
    <property type="entry name" value="LGIC_ECD_nAChR"/>
    <property type="match status" value="1"/>
</dbReference>
<dbReference type="CDD" id="cd19051">
    <property type="entry name" value="LGIC_TM_cation"/>
    <property type="match status" value="1"/>
</dbReference>
<dbReference type="FunFam" id="2.70.170.10:FF:000016">
    <property type="entry name" value="Nicotinic acetylcholine receptor subunit"/>
    <property type="match status" value="1"/>
</dbReference>
<dbReference type="Gene3D" id="2.70.170.10">
    <property type="entry name" value="Neurotransmitter-gated ion-channel ligand-binding domain"/>
    <property type="match status" value="1"/>
</dbReference>
<dbReference type="Gene3D" id="1.20.58.390">
    <property type="entry name" value="Neurotransmitter-gated ion-channel transmembrane domain"/>
    <property type="match status" value="2"/>
</dbReference>
<dbReference type="InterPro" id="IPR006202">
    <property type="entry name" value="Neur_chan_lig-bd"/>
</dbReference>
<dbReference type="InterPro" id="IPR036734">
    <property type="entry name" value="Neur_chan_lig-bd_sf"/>
</dbReference>
<dbReference type="InterPro" id="IPR006201">
    <property type="entry name" value="Neur_channel"/>
</dbReference>
<dbReference type="InterPro" id="IPR036719">
    <property type="entry name" value="Neuro-gated_channel_TM_sf"/>
</dbReference>
<dbReference type="InterPro" id="IPR038050">
    <property type="entry name" value="Neuro_actylchol_rec"/>
</dbReference>
<dbReference type="InterPro" id="IPR006029">
    <property type="entry name" value="Neurotrans-gated_channel_TM"/>
</dbReference>
<dbReference type="InterPro" id="IPR018000">
    <property type="entry name" value="Neurotransmitter_ion_chnl_CS"/>
</dbReference>
<dbReference type="NCBIfam" id="TIGR00860">
    <property type="entry name" value="LIC"/>
    <property type="match status" value="1"/>
</dbReference>
<dbReference type="PANTHER" id="PTHR18945">
    <property type="entry name" value="NEUROTRANSMITTER GATED ION CHANNEL"/>
    <property type="match status" value="1"/>
</dbReference>
<dbReference type="Pfam" id="PF02931">
    <property type="entry name" value="Neur_chan_LBD"/>
    <property type="match status" value="1"/>
</dbReference>
<dbReference type="Pfam" id="PF02932">
    <property type="entry name" value="Neur_chan_memb"/>
    <property type="match status" value="1"/>
</dbReference>
<dbReference type="PRINTS" id="PR00252">
    <property type="entry name" value="NRIONCHANNEL"/>
</dbReference>
<dbReference type="SUPFAM" id="SSF90112">
    <property type="entry name" value="Neurotransmitter-gated ion-channel transmembrane pore"/>
    <property type="match status" value="1"/>
</dbReference>
<dbReference type="SUPFAM" id="SSF63712">
    <property type="entry name" value="Nicotinic receptor ligand binding domain-like"/>
    <property type="match status" value="1"/>
</dbReference>
<dbReference type="PROSITE" id="PS00236">
    <property type="entry name" value="NEUROTR_ION_CHANNEL"/>
    <property type="match status" value="1"/>
</dbReference>
<evidence type="ECO:0000250" key="1"/>
<evidence type="ECO:0000255" key="2"/>
<evidence type="ECO:0000269" key="3">
    <source>
    </source>
</evidence>
<evidence type="ECO:0000305" key="4"/>
<name>ACR7_CAEEL</name>
<comment type="function">
    <text evidence="1">After binding acetylcholine, the AChR responds by an extensive change in conformation that affects all subunits and leads to opening of an ion-conducting channel across the plasma membrane.</text>
</comment>
<comment type="subunit">
    <text evidence="1">Forms a homooligomeric channel blocked by alpha-bungarotoxin. The structure is probably pentameric (By similarity).</text>
</comment>
<comment type="subcellular location">
    <subcellularLocation>
        <location evidence="4">Postsynaptic cell membrane</location>
        <topology evidence="4">Multi-pass membrane protein</topology>
    </subcellularLocation>
    <subcellularLocation>
        <location evidence="4">Cell membrane</location>
        <topology evidence="4">Multi-pass membrane protein</topology>
    </subcellularLocation>
</comment>
<comment type="similarity">
    <text evidence="4">Belongs to the ligand-gated ion channel (TC 1.A.9) family. Acetylcholine receptor (TC 1.A.9.1) subfamily.</text>
</comment>
<sequence>MMVQSIQIVLPVALFFLIVFNGFTVEGSKKEAQLYRDLLTNYSYLVRPVRNPKKALTVTMKVFIQQVLLVDAKHQMIEVNAWLKYIWTDFRLRWNPLDYENITSVRFQGEDQIWQPDILLYNRYIEDEQESFDITYKTNAVAYSDGVINWIPPGIFKLSCKMDITLFPFDEQICFMKFGSWTYHGFALDLRLDVVKGQEPSADLSTYITNGEWHLLSAPARREEKFYKCCKEPYPTVKFYLHLRRRTFYYVFNVVLPTLLVSFMSLLAFCLPATDLSEKIGLQTTILLSVCFFLTILSEMTPTTSEAVPLLGVFFSALTFIVAMSTTFTILVLNIRYRQITNHYLSPMFRSIFLECLPWLMMMKRPDHKFRRGSSYRDSSADQCVQCAKNAELKSILRGTDNQQQIETNTFYPFPTETLSLNRKVGDGLFIQRRCQIHEEARSEKFTHGMLACEKSLRENGSELANILVTILKMYEVMVSQVERIRKRIALKRKRKDIQDEWKFAAQAVDRFCLIIFTIVFIICCFIFVAIPPIKILD</sequence>
<protein>
    <recommendedName>
        <fullName>Acetylcholine receptor subunit alpha-type acr-7</fullName>
    </recommendedName>
</protein>
<reference key="1">
    <citation type="journal article" date="1998" name="Recept. Channels">
        <title>An extensive and diverse gene family of nicotinic acetylcholine receptor alpha subunits in Caenorhabditis elegans.</title>
        <authorList>
            <person name="Mongan N.P."/>
            <person name="Baylis H.A."/>
            <person name="Adcock C."/>
            <person name="Smith G.R."/>
            <person name="Sansom M.S.P."/>
            <person name="Sattelle D.B."/>
        </authorList>
    </citation>
    <scope>NUCLEOTIDE SEQUENCE [MRNA]</scope>
    <source>
        <strain>Bristol N2</strain>
    </source>
</reference>
<reference key="2">
    <citation type="journal article" date="1998" name="Science">
        <title>Genome sequence of the nematode C. elegans: a platform for investigating biology.</title>
        <authorList>
            <consortium name="The C. elegans sequencing consortium"/>
        </authorList>
    </citation>
    <scope>NUCLEOTIDE SEQUENCE [LARGE SCALE GENOMIC DNA]</scope>
    <source>
        <strain>Bristol N2</strain>
    </source>
</reference>
<reference key="3">
    <citation type="journal article" date="2007" name="Mol. Cell. Proteomics">
        <title>Proteomics reveals N-linked glycoprotein diversity in Caenorhabditis elegans and suggests an atypical translocation mechanism for integral membrane proteins.</title>
        <authorList>
            <person name="Kaji H."/>
            <person name="Kamiie J."/>
            <person name="Kawakami H."/>
            <person name="Kido K."/>
            <person name="Yamauchi Y."/>
            <person name="Shinkawa T."/>
            <person name="Taoka M."/>
            <person name="Takahashi N."/>
            <person name="Isobe T."/>
        </authorList>
    </citation>
    <scope>GLYCOSYLATION [LARGE SCALE ANALYSIS] AT ASN-101</scope>
    <scope>IDENTIFICATION BY MASS SPECTROMETRY</scope>
    <source>
        <strain>Bristol N2</strain>
    </source>
</reference>
<organism>
    <name type="scientific">Caenorhabditis elegans</name>
    <dbReference type="NCBI Taxonomy" id="6239"/>
    <lineage>
        <taxon>Eukaryota</taxon>
        <taxon>Metazoa</taxon>
        <taxon>Ecdysozoa</taxon>
        <taxon>Nematoda</taxon>
        <taxon>Chromadorea</taxon>
        <taxon>Rhabditida</taxon>
        <taxon>Rhabditina</taxon>
        <taxon>Rhabditomorpha</taxon>
        <taxon>Rhabditoidea</taxon>
        <taxon>Rhabditidae</taxon>
        <taxon>Peloderinae</taxon>
        <taxon>Caenorhabditis</taxon>
    </lineage>
</organism>